<feature type="chain" id="PRO_0000162558" description="Global transcriptional regulator Spx">
    <location>
        <begin position="1"/>
        <end position="131"/>
    </location>
</feature>
<feature type="disulfide bond" description="Redox-active" evidence="1">
    <location>
        <begin position="10"/>
        <end position="13"/>
    </location>
</feature>
<reference key="1">
    <citation type="journal article" date="2004" name="Nucleic Acids Res.">
        <title>Whole genome comparisons of serotype 4b and 1/2a strains of the food-borne pathogen Listeria monocytogenes reveal new insights into the core genome components of this species.</title>
        <authorList>
            <person name="Nelson K.E."/>
            <person name="Fouts D.E."/>
            <person name="Mongodin E.F."/>
            <person name="Ravel J."/>
            <person name="DeBoy R.T."/>
            <person name="Kolonay J.F."/>
            <person name="Rasko D.A."/>
            <person name="Angiuoli S.V."/>
            <person name="Gill S.R."/>
            <person name="Paulsen I.T."/>
            <person name="Peterson J.D."/>
            <person name="White O."/>
            <person name="Nelson W.C."/>
            <person name="Nierman W.C."/>
            <person name="Beanan M.J."/>
            <person name="Brinkac L.M."/>
            <person name="Daugherty S.C."/>
            <person name="Dodson R.J."/>
            <person name="Durkin A.S."/>
            <person name="Madupu R."/>
            <person name="Haft D.H."/>
            <person name="Selengut J."/>
            <person name="Van Aken S.E."/>
            <person name="Khouri H.M."/>
            <person name="Fedorova N."/>
            <person name="Forberger H.A."/>
            <person name="Tran B."/>
            <person name="Kathariou S."/>
            <person name="Wonderling L.D."/>
            <person name="Uhlich G.A."/>
            <person name="Bayles D.O."/>
            <person name="Luchansky J.B."/>
            <person name="Fraser C.M."/>
        </authorList>
    </citation>
    <scope>NUCLEOTIDE SEQUENCE [LARGE SCALE GENOMIC DNA]</scope>
    <source>
        <strain>F2365</strain>
    </source>
</reference>
<name>SPX_LISMF</name>
<protein>
    <recommendedName>
        <fullName evidence="1">Global transcriptional regulator Spx</fullName>
    </recommendedName>
</protein>
<dbReference type="EMBL" id="AE017262">
    <property type="protein sequence ID" value="AAT04991.1"/>
    <property type="molecule type" value="Genomic_DNA"/>
</dbReference>
<dbReference type="SMR" id="Q71XH4"/>
<dbReference type="KEGG" id="lmf:LMOf2365_2224"/>
<dbReference type="HOGENOM" id="CLU_116644_1_1_9"/>
<dbReference type="GO" id="GO:0005737">
    <property type="term" value="C:cytoplasm"/>
    <property type="evidence" value="ECO:0007669"/>
    <property type="project" value="UniProtKB-SubCell"/>
</dbReference>
<dbReference type="GO" id="GO:0045892">
    <property type="term" value="P:negative regulation of DNA-templated transcription"/>
    <property type="evidence" value="ECO:0007669"/>
    <property type="project" value="InterPro"/>
</dbReference>
<dbReference type="CDD" id="cd03032">
    <property type="entry name" value="ArsC_Spx"/>
    <property type="match status" value="1"/>
</dbReference>
<dbReference type="Gene3D" id="3.40.30.10">
    <property type="entry name" value="Glutaredoxin"/>
    <property type="match status" value="1"/>
</dbReference>
<dbReference type="HAMAP" id="MF_01132">
    <property type="entry name" value="Spx"/>
    <property type="match status" value="1"/>
</dbReference>
<dbReference type="InterPro" id="IPR006660">
    <property type="entry name" value="Arsenate_reductase-like"/>
</dbReference>
<dbReference type="InterPro" id="IPR023731">
    <property type="entry name" value="Spx"/>
</dbReference>
<dbReference type="InterPro" id="IPR036249">
    <property type="entry name" value="Thioredoxin-like_sf"/>
</dbReference>
<dbReference type="InterPro" id="IPR006504">
    <property type="entry name" value="Tscrpt_reg_Spx/MgsR"/>
</dbReference>
<dbReference type="NCBIfam" id="TIGR01617">
    <property type="entry name" value="arsC_related"/>
    <property type="match status" value="1"/>
</dbReference>
<dbReference type="NCBIfam" id="NF002459">
    <property type="entry name" value="PRK01655.1"/>
    <property type="match status" value="1"/>
</dbReference>
<dbReference type="NCBIfam" id="NF009210">
    <property type="entry name" value="PRK12559.1"/>
    <property type="match status" value="1"/>
</dbReference>
<dbReference type="PANTHER" id="PTHR30041">
    <property type="entry name" value="ARSENATE REDUCTASE"/>
    <property type="match status" value="1"/>
</dbReference>
<dbReference type="PANTHER" id="PTHR30041:SF7">
    <property type="entry name" value="GLOBAL TRANSCRIPTIONAL REGULATOR SPX"/>
    <property type="match status" value="1"/>
</dbReference>
<dbReference type="Pfam" id="PF03960">
    <property type="entry name" value="ArsC"/>
    <property type="match status" value="1"/>
</dbReference>
<dbReference type="SUPFAM" id="SSF52833">
    <property type="entry name" value="Thioredoxin-like"/>
    <property type="match status" value="1"/>
</dbReference>
<dbReference type="PROSITE" id="PS51353">
    <property type="entry name" value="ARSC"/>
    <property type="match status" value="1"/>
</dbReference>
<sequence length="131" mass="15582">MVTLYTSPSCTSCRKARAWLEEHDIPYKERNIFSEPLSLDEIKEILRMTEDGTDEIISTRSKTFQKLNVDLDSLPLQQLFELIQKNPGLLRRPIIIDEKRLQVGYNEDEIRRFLPRRVRTYQLREAQKMVN</sequence>
<keyword id="KW-0963">Cytoplasm</keyword>
<keyword id="KW-1015">Disulfide bond</keyword>
<keyword id="KW-0676">Redox-active center</keyword>
<keyword id="KW-0804">Transcription</keyword>
<keyword id="KW-0805">Transcription regulation</keyword>
<proteinExistence type="inferred from homology"/>
<accession>Q71XH4</accession>
<organism>
    <name type="scientific">Listeria monocytogenes serotype 4b (strain F2365)</name>
    <dbReference type="NCBI Taxonomy" id="265669"/>
    <lineage>
        <taxon>Bacteria</taxon>
        <taxon>Bacillati</taxon>
        <taxon>Bacillota</taxon>
        <taxon>Bacilli</taxon>
        <taxon>Bacillales</taxon>
        <taxon>Listeriaceae</taxon>
        <taxon>Listeria</taxon>
    </lineage>
</organism>
<comment type="function">
    <text evidence="1">Global transcriptional regulator that plays a key role in stress response and exerts either positive or negative regulation of genes. Acts by interacting with the C-terminal domain of the alpha subunit of the RNA polymerase (RNAP). This interaction can enhance binding of RNAP to the promoter region of target genes and stimulate their transcription, or block interaction of RNAP with activator.</text>
</comment>
<comment type="subunit">
    <text evidence="1">Interacts with the C-terminal domain of the alpha subunit of the RNAP.</text>
</comment>
<comment type="subcellular location">
    <subcellularLocation>
        <location evidence="1">Cytoplasm</location>
    </subcellularLocation>
</comment>
<comment type="similarity">
    <text evidence="1">Belongs to the ArsC family. Spx subfamily.</text>
</comment>
<gene>
    <name evidence="1" type="primary">spx</name>
    <name type="ordered locus">LMOf2365_2224</name>
</gene>
<evidence type="ECO:0000255" key="1">
    <source>
        <dbReference type="HAMAP-Rule" id="MF_01132"/>
    </source>
</evidence>